<keyword id="KW-0030">Aminoacyl-tRNA synthetase</keyword>
<keyword id="KW-0067">ATP-binding</keyword>
<keyword id="KW-0963">Cytoplasm</keyword>
<keyword id="KW-0436">Ligase</keyword>
<keyword id="KW-0547">Nucleotide-binding</keyword>
<keyword id="KW-0648">Protein biosynthesis</keyword>
<evidence type="ECO:0000255" key="1">
    <source>
        <dbReference type="HAMAP-Rule" id="MF_00253"/>
    </source>
</evidence>
<proteinExistence type="inferred from homology"/>
<name>SYG_STAAW</name>
<dbReference type="EC" id="6.1.1.14" evidence="1"/>
<dbReference type="EMBL" id="BA000033">
    <property type="protein sequence ID" value="BAB95382.1"/>
    <property type="molecule type" value="Genomic_DNA"/>
</dbReference>
<dbReference type="RefSeq" id="WP_001030080.1">
    <property type="nucleotide sequence ID" value="NC_003923.1"/>
</dbReference>
<dbReference type="SMR" id="P67035"/>
<dbReference type="KEGG" id="sam:MW1517"/>
<dbReference type="HOGENOM" id="CLU_015515_2_1_9"/>
<dbReference type="GO" id="GO:0005737">
    <property type="term" value="C:cytoplasm"/>
    <property type="evidence" value="ECO:0007669"/>
    <property type="project" value="UniProtKB-SubCell"/>
</dbReference>
<dbReference type="GO" id="GO:0005524">
    <property type="term" value="F:ATP binding"/>
    <property type="evidence" value="ECO:0007669"/>
    <property type="project" value="UniProtKB-UniRule"/>
</dbReference>
<dbReference type="GO" id="GO:0140096">
    <property type="term" value="F:catalytic activity, acting on a protein"/>
    <property type="evidence" value="ECO:0007669"/>
    <property type="project" value="UniProtKB-ARBA"/>
</dbReference>
<dbReference type="GO" id="GO:0004820">
    <property type="term" value="F:glycine-tRNA ligase activity"/>
    <property type="evidence" value="ECO:0000250"/>
    <property type="project" value="UniProtKB"/>
</dbReference>
<dbReference type="GO" id="GO:0046983">
    <property type="term" value="F:protein dimerization activity"/>
    <property type="evidence" value="ECO:0000250"/>
    <property type="project" value="UniProtKB"/>
</dbReference>
<dbReference type="GO" id="GO:0016740">
    <property type="term" value="F:transferase activity"/>
    <property type="evidence" value="ECO:0007669"/>
    <property type="project" value="UniProtKB-ARBA"/>
</dbReference>
<dbReference type="GO" id="GO:0006426">
    <property type="term" value="P:glycyl-tRNA aminoacylation"/>
    <property type="evidence" value="ECO:0007669"/>
    <property type="project" value="UniProtKB-UniRule"/>
</dbReference>
<dbReference type="CDD" id="cd00774">
    <property type="entry name" value="GlyRS-like_core"/>
    <property type="match status" value="1"/>
</dbReference>
<dbReference type="CDD" id="cd00858">
    <property type="entry name" value="GlyRS_anticodon"/>
    <property type="match status" value="1"/>
</dbReference>
<dbReference type="FunFam" id="3.40.50.800:FF:000002">
    <property type="entry name" value="Glycine--tRNA ligase"/>
    <property type="match status" value="1"/>
</dbReference>
<dbReference type="Gene3D" id="3.30.40.230">
    <property type="match status" value="1"/>
</dbReference>
<dbReference type="Gene3D" id="3.40.50.800">
    <property type="entry name" value="Anticodon-binding domain"/>
    <property type="match status" value="1"/>
</dbReference>
<dbReference type="Gene3D" id="3.30.930.10">
    <property type="entry name" value="Bira Bifunctional Protein, Domain 2"/>
    <property type="match status" value="1"/>
</dbReference>
<dbReference type="HAMAP" id="MF_00253_B">
    <property type="entry name" value="Gly_tRNA_synth_B"/>
    <property type="match status" value="1"/>
</dbReference>
<dbReference type="InterPro" id="IPR002314">
    <property type="entry name" value="aa-tRNA-synt_IIb"/>
</dbReference>
<dbReference type="InterPro" id="IPR006195">
    <property type="entry name" value="aa-tRNA-synth_II"/>
</dbReference>
<dbReference type="InterPro" id="IPR045864">
    <property type="entry name" value="aa-tRNA-synth_II/BPL/LPL"/>
</dbReference>
<dbReference type="InterPro" id="IPR004154">
    <property type="entry name" value="Anticodon-bd"/>
</dbReference>
<dbReference type="InterPro" id="IPR036621">
    <property type="entry name" value="Anticodon-bd_dom_sf"/>
</dbReference>
<dbReference type="InterPro" id="IPR027031">
    <property type="entry name" value="Gly-tRNA_synthase/POLG2"/>
</dbReference>
<dbReference type="InterPro" id="IPR022961">
    <property type="entry name" value="Gly_tRNA_ligase_bac"/>
</dbReference>
<dbReference type="InterPro" id="IPR033731">
    <property type="entry name" value="GlyRS-like_core"/>
</dbReference>
<dbReference type="InterPro" id="IPR002315">
    <property type="entry name" value="tRNA-synt_gly"/>
</dbReference>
<dbReference type="NCBIfam" id="TIGR00389">
    <property type="entry name" value="glyS_dimeric"/>
    <property type="match status" value="1"/>
</dbReference>
<dbReference type="NCBIfam" id="NF003211">
    <property type="entry name" value="PRK04173.1"/>
    <property type="match status" value="1"/>
</dbReference>
<dbReference type="PANTHER" id="PTHR10745:SF8">
    <property type="entry name" value="DNA POLYMERASE SUBUNIT GAMMA-2, MITOCHONDRIAL"/>
    <property type="match status" value="1"/>
</dbReference>
<dbReference type="PANTHER" id="PTHR10745">
    <property type="entry name" value="GLYCYL-TRNA SYNTHETASE/DNA POLYMERASE SUBUNIT GAMMA-2"/>
    <property type="match status" value="1"/>
</dbReference>
<dbReference type="Pfam" id="PF03129">
    <property type="entry name" value="HGTP_anticodon"/>
    <property type="match status" value="1"/>
</dbReference>
<dbReference type="Pfam" id="PF00587">
    <property type="entry name" value="tRNA-synt_2b"/>
    <property type="match status" value="1"/>
</dbReference>
<dbReference type="PRINTS" id="PR01043">
    <property type="entry name" value="TRNASYNTHGLY"/>
</dbReference>
<dbReference type="SUPFAM" id="SSF52954">
    <property type="entry name" value="Class II aaRS ABD-related"/>
    <property type="match status" value="1"/>
</dbReference>
<dbReference type="SUPFAM" id="SSF55681">
    <property type="entry name" value="Class II aaRS and biotin synthetases"/>
    <property type="match status" value="1"/>
</dbReference>
<dbReference type="PROSITE" id="PS50862">
    <property type="entry name" value="AA_TRNA_LIGASE_II"/>
    <property type="match status" value="1"/>
</dbReference>
<gene>
    <name evidence="1" type="primary">glyQS</name>
    <name type="ordered locus">MW1517</name>
</gene>
<accession>P67035</accession>
<accession>Q99TT1</accession>
<organism>
    <name type="scientific">Staphylococcus aureus (strain MW2)</name>
    <dbReference type="NCBI Taxonomy" id="196620"/>
    <lineage>
        <taxon>Bacteria</taxon>
        <taxon>Bacillati</taxon>
        <taxon>Bacillota</taxon>
        <taxon>Bacilli</taxon>
        <taxon>Bacillales</taxon>
        <taxon>Staphylococcaceae</taxon>
        <taxon>Staphylococcus</taxon>
    </lineage>
</organism>
<protein>
    <recommendedName>
        <fullName evidence="1">Glycine--tRNA ligase</fullName>
        <ecNumber evidence="1">6.1.1.14</ecNumber>
    </recommendedName>
    <alternativeName>
        <fullName evidence="1">Glycyl-tRNA synthetase</fullName>
        <shortName evidence="1">GlyRS</shortName>
    </alternativeName>
</protein>
<comment type="function">
    <text evidence="1">Catalyzes the attachment of glycine to tRNA(Gly).</text>
</comment>
<comment type="catalytic activity">
    <reaction evidence="1">
        <text>tRNA(Gly) + glycine + ATP = glycyl-tRNA(Gly) + AMP + diphosphate</text>
        <dbReference type="Rhea" id="RHEA:16013"/>
        <dbReference type="Rhea" id="RHEA-COMP:9664"/>
        <dbReference type="Rhea" id="RHEA-COMP:9683"/>
        <dbReference type="ChEBI" id="CHEBI:30616"/>
        <dbReference type="ChEBI" id="CHEBI:33019"/>
        <dbReference type="ChEBI" id="CHEBI:57305"/>
        <dbReference type="ChEBI" id="CHEBI:78442"/>
        <dbReference type="ChEBI" id="CHEBI:78522"/>
        <dbReference type="ChEBI" id="CHEBI:456215"/>
        <dbReference type="EC" id="6.1.1.14"/>
    </reaction>
</comment>
<comment type="subunit">
    <text evidence="1">Homodimer.</text>
</comment>
<comment type="subcellular location">
    <subcellularLocation>
        <location evidence="1">Cytoplasm</location>
    </subcellularLocation>
</comment>
<comment type="similarity">
    <text evidence="1">Belongs to the class-II aminoacyl-tRNA synthetase family.</text>
</comment>
<feature type="chain" id="PRO_0000072977" description="Glycine--tRNA ligase">
    <location>
        <begin position="1"/>
        <end position="463"/>
    </location>
</feature>
<feature type="binding site" evidence="1">
    <location>
        <position position="98"/>
    </location>
    <ligand>
        <name>substrate</name>
    </ligand>
</feature>
<feature type="binding site" evidence="1">
    <location>
        <position position="174"/>
    </location>
    <ligand>
        <name>substrate</name>
    </ligand>
</feature>
<feature type="binding site" evidence="1">
    <location>
        <begin position="206"/>
        <end position="208"/>
    </location>
    <ligand>
        <name>ATP</name>
        <dbReference type="ChEBI" id="CHEBI:30616"/>
    </ligand>
</feature>
<feature type="binding site" evidence="1">
    <location>
        <begin position="216"/>
        <end position="221"/>
    </location>
    <ligand>
        <name>ATP</name>
        <dbReference type="ChEBI" id="CHEBI:30616"/>
    </ligand>
</feature>
<feature type="binding site" evidence="1">
    <location>
        <begin position="221"/>
        <end position="225"/>
    </location>
    <ligand>
        <name>substrate</name>
    </ligand>
</feature>
<feature type="binding site" evidence="1">
    <location>
        <begin position="290"/>
        <end position="291"/>
    </location>
    <ligand>
        <name>ATP</name>
        <dbReference type="ChEBI" id="CHEBI:30616"/>
    </ligand>
</feature>
<feature type="binding site" evidence="1">
    <location>
        <begin position="330"/>
        <end position="334"/>
    </location>
    <ligand>
        <name>substrate</name>
    </ligand>
</feature>
<feature type="binding site" evidence="1">
    <location>
        <begin position="334"/>
        <end position="337"/>
    </location>
    <ligand>
        <name>ATP</name>
        <dbReference type="ChEBI" id="CHEBI:30616"/>
    </ligand>
</feature>
<sequence>MAKDMDTIVSLAKHRGFVFPGSDIYGGLSNTWDYGPLGVELKNNVKKAWWQKFITQSPFNVGIDAAILMNPKVWEASGHLNNFNDPMIDNKDSKIRYRADKLIEDYMQDVKGDENFIADGLSFEQMKKIIDDEGIVCPVSKTANWTEIRQFNLMFKTFQGVTEDSTNEIFLRPETAQGIFVNYKNVQRSMRKKLPFGIGQIGKSFRNEITPGNFIFRTREFEQMELEFFCKPGEEIEWQNYWKTFASDWLTSLNMSSENMRLRDHDEDELSHYSNATTDIEYKFPFGWGELWGIASRTDFDLRKHAEHSGEDFRYHDPETNEKYIPYCIEPSLGADRVTLAFLCDAYDEEGVEGSKDARTVLHFHPALAPYKAAILPLSKKLSGEAIKIFEQLSSKFSIDFDESQSIGKRYRRQDEIGTPYCVTFDFDSLEDNQVTVRDRDSMEQVRMPISELEAFLTEKTKF</sequence>
<reference key="1">
    <citation type="journal article" date="2002" name="Lancet">
        <title>Genome and virulence determinants of high virulence community-acquired MRSA.</title>
        <authorList>
            <person name="Baba T."/>
            <person name="Takeuchi F."/>
            <person name="Kuroda M."/>
            <person name="Yuzawa H."/>
            <person name="Aoki K."/>
            <person name="Oguchi A."/>
            <person name="Nagai Y."/>
            <person name="Iwama N."/>
            <person name="Asano K."/>
            <person name="Naimi T."/>
            <person name="Kuroda H."/>
            <person name="Cui L."/>
            <person name="Yamamoto K."/>
            <person name="Hiramatsu K."/>
        </authorList>
    </citation>
    <scope>NUCLEOTIDE SEQUENCE [LARGE SCALE GENOMIC DNA]</scope>
    <source>
        <strain>MW2</strain>
    </source>
</reference>